<accession>A1JIG1</accession>
<feature type="chain" id="PRO_0000335871" description="3-octaprenyl-4-hydroxybenzoate carboxy-lyase">
    <location>
        <begin position="1"/>
        <end position="495"/>
    </location>
</feature>
<feature type="active site" description="Proton donor" evidence="1">
    <location>
        <position position="287"/>
    </location>
</feature>
<feature type="binding site" evidence="1">
    <location>
        <position position="172"/>
    </location>
    <ligand>
        <name>Mn(2+)</name>
        <dbReference type="ChEBI" id="CHEBI:29035"/>
    </ligand>
</feature>
<feature type="binding site" evidence="1">
    <location>
        <begin position="175"/>
        <end position="177"/>
    </location>
    <ligand>
        <name>prenylated FMN</name>
        <dbReference type="ChEBI" id="CHEBI:87746"/>
    </ligand>
</feature>
<feature type="binding site" evidence="1">
    <location>
        <begin position="189"/>
        <end position="191"/>
    </location>
    <ligand>
        <name>prenylated FMN</name>
        <dbReference type="ChEBI" id="CHEBI:87746"/>
    </ligand>
</feature>
<feature type="binding site" evidence="1">
    <location>
        <begin position="194"/>
        <end position="195"/>
    </location>
    <ligand>
        <name>prenylated FMN</name>
        <dbReference type="ChEBI" id="CHEBI:87746"/>
    </ligand>
</feature>
<feature type="binding site" evidence="1">
    <location>
        <position position="238"/>
    </location>
    <ligand>
        <name>Mn(2+)</name>
        <dbReference type="ChEBI" id="CHEBI:29035"/>
    </ligand>
</feature>
<name>UBID_YERE8</name>
<keyword id="KW-1003">Cell membrane</keyword>
<keyword id="KW-0210">Decarboxylase</keyword>
<keyword id="KW-0285">Flavoprotein</keyword>
<keyword id="KW-0288">FMN</keyword>
<keyword id="KW-0456">Lyase</keyword>
<keyword id="KW-0464">Manganese</keyword>
<keyword id="KW-0472">Membrane</keyword>
<keyword id="KW-0479">Metal-binding</keyword>
<keyword id="KW-0831">Ubiquinone biosynthesis</keyword>
<dbReference type="EC" id="4.1.1.98" evidence="1"/>
<dbReference type="EMBL" id="AM286415">
    <property type="protein sequence ID" value="CAL10399.1"/>
    <property type="status" value="ALT_INIT"/>
    <property type="molecule type" value="Genomic_DNA"/>
</dbReference>
<dbReference type="RefSeq" id="YP_001004650.1">
    <property type="nucleotide sequence ID" value="NC_008800.1"/>
</dbReference>
<dbReference type="SMR" id="A1JIG1"/>
<dbReference type="KEGG" id="yen:YE0265"/>
<dbReference type="PATRIC" id="fig|393305.7.peg.357"/>
<dbReference type="eggNOG" id="COG0043">
    <property type="taxonomic scope" value="Bacteria"/>
</dbReference>
<dbReference type="HOGENOM" id="CLU_023348_4_1_6"/>
<dbReference type="OrthoDB" id="9809841at2"/>
<dbReference type="UniPathway" id="UPA00232"/>
<dbReference type="Proteomes" id="UP000000642">
    <property type="component" value="Chromosome"/>
</dbReference>
<dbReference type="GO" id="GO:0005829">
    <property type="term" value="C:cytosol"/>
    <property type="evidence" value="ECO:0007669"/>
    <property type="project" value="TreeGrafter"/>
</dbReference>
<dbReference type="GO" id="GO:0005886">
    <property type="term" value="C:plasma membrane"/>
    <property type="evidence" value="ECO:0007669"/>
    <property type="project" value="UniProtKB-SubCell"/>
</dbReference>
<dbReference type="GO" id="GO:0008694">
    <property type="term" value="F:3-octaprenyl-4-hydroxybenzoate carboxy-lyase activity"/>
    <property type="evidence" value="ECO:0007669"/>
    <property type="project" value="UniProtKB-UniRule"/>
</dbReference>
<dbReference type="GO" id="GO:0046872">
    <property type="term" value="F:metal ion binding"/>
    <property type="evidence" value="ECO:0007669"/>
    <property type="project" value="UniProtKB-KW"/>
</dbReference>
<dbReference type="GO" id="GO:0006744">
    <property type="term" value="P:ubiquinone biosynthetic process"/>
    <property type="evidence" value="ECO:0007669"/>
    <property type="project" value="UniProtKB-UniRule"/>
</dbReference>
<dbReference type="FunFam" id="1.20.5.570:FF:000001">
    <property type="entry name" value="3-octaprenyl-4-hydroxybenzoate carboxy-lyase"/>
    <property type="match status" value="1"/>
</dbReference>
<dbReference type="FunFam" id="3.40.1670.10:FF:000001">
    <property type="entry name" value="3-octaprenyl-4-hydroxybenzoate carboxy-lyase"/>
    <property type="match status" value="1"/>
</dbReference>
<dbReference type="Gene3D" id="1.20.5.570">
    <property type="entry name" value="Single helix bin"/>
    <property type="match status" value="1"/>
</dbReference>
<dbReference type="Gene3D" id="3.40.1670.10">
    <property type="entry name" value="UbiD C-terminal domain-like"/>
    <property type="match status" value="1"/>
</dbReference>
<dbReference type="HAMAP" id="MF_01636">
    <property type="entry name" value="UbiD"/>
    <property type="match status" value="1"/>
</dbReference>
<dbReference type="InterPro" id="IPR002830">
    <property type="entry name" value="UbiD"/>
</dbReference>
<dbReference type="InterPro" id="IPR049381">
    <property type="entry name" value="UbiD-like_C"/>
</dbReference>
<dbReference type="InterPro" id="IPR049383">
    <property type="entry name" value="UbiD-like_N"/>
</dbReference>
<dbReference type="InterPro" id="IPR023677">
    <property type="entry name" value="UbiD_bacteria"/>
</dbReference>
<dbReference type="InterPro" id="IPR048304">
    <property type="entry name" value="UbiD_Rift_dom"/>
</dbReference>
<dbReference type="NCBIfam" id="NF008175">
    <property type="entry name" value="PRK10922.1"/>
    <property type="match status" value="1"/>
</dbReference>
<dbReference type="NCBIfam" id="TIGR00148">
    <property type="entry name" value="UbiD family decarboxylase"/>
    <property type="match status" value="1"/>
</dbReference>
<dbReference type="PANTHER" id="PTHR30108">
    <property type="entry name" value="3-OCTAPRENYL-4-HYDROXYBENZOATE CARBOXY-LYASE-RELATED"/>
    <property type="match status" value="1"/>
</dbReference>
<dbReference type="PANTHER" id="PTHR30108:SF17">
    <property type="entry name" value="FERULIC ACID DECARBOXYLASE 1"/>
    <property type="match status" value="1"/>
</dbReference>
<dbReference type="Pfam" id="PF01977">
    <property type="entry name" value="UbiD"/>
    <property type="match status" value="1"/>
</dbReference>
<dbReference type="Pfam" id="PF20696">
    <property type="entry name" value="UbiD_C"/>
    <property type="match status" value="1"/>
</dbReference>
<dbReference type="Pfam" id="PF20695">
    <property type="entry name" value="UbiD_N"/>
    <property type="match status" value="1"/>
</dbReference>
<dbReference type="SUPFAM" id="SSF50475">
    <property type="entry name" value="FMN-binding split barrel"/>
    <property type="match status" value="1"/>
</dbReference>
<dbReference type="SUPFAM" id="SSF143968">
    <property type="entry name" value="UbiD C-terminal domain-like"/>
    <property type="match status" value="1"/>
</dbReference>
<protein>
    <recommendedName>
        <fullName evidence="1">3-octaprenyl-4-hydroxybenzoate carboxy-lyase</fullName>
        <ecNumber evidence="1">4.1.1.98</ecNumber>
    </recommendedName>
    <alternativeName>
        <fullName evidence="1">Polyprenyl p-hydroxybenzoate decarboxylase</fullName>
    </alternativeName>
</protein>
<gene>
    <name evidence="1" type="primary">ubiD</name>
    <name type="ordered locus">YE0265</name>
</gene>
<organism>
    <name type="scientific">Yersinia enterocolitica serotype O:8 / biotype 1B (strain NCTC 13174 / 8081)</name>
    <dbReference type="NCBI Taxonomy" id="393305"/>
    <lineage>
        <taxon>Bacteria</taxon>
        <taxon>Pseudomonadati</taxon>
        <taxon>Pseudomonadota</taxon>
        <taxon>Gammaproteobacteria</taxon>
        <taxon>Enterobacterales</taxon>
        <taxon>Yersiniaceae</taxon>
        <taxon>Yersinia</taxon>
    </lineage>
</organism>
<comment type="function">
    <text evidence="1">Catalyzes the decarboxylation of 3-octaprenyl-4-hydroxy benzoate to 2-octaprenylphenol, an intermediate step in ubiquinone biosynthesis.</text>
</comment>
<comment type="catalytic activity">
    <reaction evidence="1">
        <text>a 4-hydroxy-3-(all-trans-polyprenyl)benzoate + H(+) = a 2-(all-trans-polyprenyl)phenol + CO2</text>
        <dbReference type="Rhea" id="RHEA:41680"/>
        <dbReference type="Rhea" id="RHEA-COMP:9514"/>
        <dbReference type="Rhea" id="RHEA-COMP:9516"/>
        <dbReference type="ChEBI" id="CHEBI:1269"/>
        <dbReference type="ChEBI" id="CHEBI:15378"/>
        <dbReference type="ChEBI" id="CHEBI:16526"/>
        <dbReference type="ChEBI" id="CHEBI:78396"/>
        <dbReference type="EC" id="4.1.1.98"/>
    </reaction>
</comment>
<comment type="cofactor">
    <cofactor evidence="1">
        <name>prenylated FMN</name>
        <dbReference type="ChEBI" id="CHEBI:87746"/>
    </cofactor>
    <text evidence="1">Binds 1 prenylated FMN per subunit.</text>
</comment>
<comment type="cofactor">
    <cofactor evidence="1">
        <name>Mn(2+)</name>
        <dbReference type="ChEBI" id="CHEBI:29035"/>
    </cofactor>
</comment>
<comment type="pathway">
    <text evidence="1">Cofactor biosynthesis; ubiquinone biosynthesis.</text>
</comment>
<comment type="subunit">
    <text evidence="1">Homohexamer.</text>
</comment>
<comment type="subcellular location">
    <subcellularLocation>
        <location evidence="1">Cell membrane</location>
        <topology evidence="1">Peripheral membrane protein</topology>
    </subcellularLocation>
</comment>
<comment type="similarity">
    <text evidence="1">Belongs to the UbiD family.</text>
</comment>
<comment type="sequence caution" evidence="2">
    <conflict type="erroneous initiation">
        <sequence resource="EMBL-CDS" id="CAL10399"/>
    </conflict>
</comment>
<proteinExistence type="inferred from homology"/>
<evidence type="ECO:0000255" key="1">
    <source>
        <dbReference type="HAMAP-Rule" id="MF_01636"/>
    </source>
</evidence>
<evidence type="ECO:0000305" key="2"/>
<reference key="1">
    <citation type="journal article" date="2006" name="PLoS Genet.">
        <title>The complete genome sequence and comparative genome analysis of the high pathogenicity Yersinia enterocolitica strain 8081.</title>
        <authorList>
            <person name="Thomson N.R."/>
            <person name="Howard S."/>
            <person name="Wren B.W."/>
            <person name="Holden M.T.G."/>
            <person name="Crossman L."/>
            <person name="Challis G.L."/>
            <person name="Churcher C."/>
            <person name="Mungall K."/>
            <person name="Brooks K."/>
            <person name="Chillingworth T."/>
            <person name="Feltwell T."/>
            <person name="Abdellah Z."/>
            <person name="Hauser H."/>
            <person name="Jagels K."/>
            <person name="Maddison M."/>
            <person name="Moule S."/>
            <person name="Sanders M."/>
            <person name="Whitehead S."/>
            <person name="Quail M.A."/>
            <person name="Dougan G."/>
            <person name="Parkhill J."/>
            <person name="Prentice M.B."/>
        </authorList>
    </citation>
    <scope>NUCLEOTIDE SEQUENCE [LARGE SCALE GENOMIC DNA]</scope>
    <source>
        <strain>NCTC 13174 / 8081</strain>
    </source>
</reference>
<sequence length="495" mass="55902">MKYRDLRDFLSLLEQRGELKRISQPIDPYLEMTEIADRTLRAGGPALLFENPKGYNMPVLCNLFGTAKRVAMGMGQEDVSALRDVGKLLAFLKEPDPPKGFRDLFDKLPKFKQVLNMPTKCLSSAPCQEQVWEGEDVDLSRIPVMHCWPEDAAPLVSWGLTVTRGPHKERQNLGIYRQQVLGKNKLIMRWLSHRGGALDYQEWCEAHPGERFPVAVALGADPATILAAVTPVPDTLSEYAFAGLLRGHKTEVVKCLSNSLEVPASAEIVLEGYIEQGEMAPEGPYGDHTGYYNEIDSFPVFTVTHITQRKDAIYHSTYTGRPPDEPAVMGVALNEVFVPILQKQFPEIVDFYLPPEGCSYRLAVVTIKKQYAGHAKRVMMGVWSFLRQFMYTKFVIVCDDDINARDWNDVIWAITTRMDPSRDTVLIENTPIDYLDFASPVSGLGSKMGLDATNKWPAETPREWGRPIKMDEEVRARVDAIWDELAIFSDKETKR</sequence>